<proteinExistence type="inferred from homology"/>
<gene>
    <name type="primary">ycf73-A</name>
</gene>
<gene>
    <name type="primary">ycf73-B</name>
</gene>
<comment type="subcellular location">
    <subcellularLocation>
        <location>Plastid</location>
        <location>Chloroplast</location>
    </subcellularLocation>
</comment>
<comment type="similarity">
    <text evidence="1">Belongs to the ycf73 family.</text>
</comment>
<dbReference type="EMBL" id="AY522331">
    <property type="status" value="NOT_ANNOTATED_CDS"/>
    <property type="molecule type" value="Genomic_DNA"/>
</dbReference>
<dbReference type="SMR" id="P0C310"/>
<dbReference type="ExpressionAtlas" id="P0C310">
    <property type="expression patterns" value="baseline"/>
</dbReference>
<dbReference type="GO" id="GO:0009507">
    <property type="term" value="C:chloroplast"/>
    <property type="evidence" value="ECO:0007669"/>
    <property type="project" value="UniProtKB-SubCell"/>
</dbReference>
<dbReference type="GO" id="GO:0009536">
    <property type="term" value="C:plastid"/>
    <property type="evidence" value="ECO:0000305"/>
    <property type="project" value="Gramene"/>
</dbReference>
<geneLocation type="chloroplast"/>
<reference key="1">
    <citation type="journal article" date="2004" name="Plant Physiol.">
        <title>A comparison of rice chloroplast genomes.</title>
        <authorList>
            <person name="Tang J."/>
            <person name="Xia H."/>
            <person name="Cao M."/>
            <person name="Zhang X."/>
            <person name="Zeng W."/>
            <person name="Hu S."/>
            <person name="Tong W."/>
            <person name="Wang J."/>
            <person name="Wang J."/>
            <person name="Yu J."/>
            <person name="Yang H."/>
            <person name="Zhu L."/>
        </authorList>
    </citation>
    <scope>NUCLEOTIDE SEQUENCE [LARGE SCALE GENOMIC DNA]</scope>
    <source>
        <strain>cv. PA64s</strain>
    </source>
</reference>
<protein>
    <recommendedName>
        <fullName>Uncharacterized protein ycf73</fullName>
    </recommendedName>
</protein>
<sequence>MTKDETLLVFTLVVSSVSVFLFGILLFMVLISATRDFRERTKSKLVKIMIWAGIVVITFAIAVRIYPIFIFLLKERIKPLVEALYDKLPWIWEVSLSRYWDRLIDFLDRYLWACAQRIQTGIRKQKGEFVVTFSCRVKKRLYARAIEVGIHLSLLSNLFWILKTTLAVGYRLLWVLYYIISFEGFLGSFRLYLVYFGFYCLLFSGKWLRTSEDRGERQAQISGILLRGMLIECAFSVLCLEEDSNLHAL</sequence>
<name>YCF73_ORYSA</name>
<keyword id="KW-0150">Chloroplast</keyword>
<keyword id="KW-0934">Plastid</keyword>
<evidence type="ECO:0000305" key="1"/>
<organism>
    <name type="scientific">Oryza sativa</name>
    <name type="common">Rice</name>
    <dbReference type="NCBI Taxonomy" id="4530"/>
    <lineage>
        <taxon>Eukaryota</taxon>
        <taxon>Viridiplantae</taxon>
        <taxon>Streptophyta</taxon>
        <taxon>Embryophyta</taxon>
        <taxon>Tracheophyta</taxon>
        <taxon>Spermatophyta</taxon>
        <taxon>Magnoliopsida</taxon>
        <taxon>Liliopsida</taxon>
        <taxon>Poales</taxon>
        <taxon>Poaceae</taxon>
        <taxon>BOP clade</taxon>
        <taxon>Oryzoideae</taxon>
        <taxon>Oryzeae</taxon>
        <taxon>Oryzinae</taxon>
        <taxon>Oryza</taxon>
    </lineage>
</organism>
<feature type="chain" id="PRO_0000288624" description="Uncharacterized protein ycf73">
    <location>
        <begin position="1"/>
        <end position="249"/>
    </location>
</feature>
<accession>P0C310</accession>